<sequence length="343" mass="37890">MIKVGIVGGSGYGAIELIRLLQTHPHVTIAHIYSHSKVDEPLKLTFPHLQHIMQHFEALTVDNNDCDVIFFATPAPVSKTCIPPLVEKGIHVIDLSGAFRIKNREIYEAYYKETAAAQDDLNHAIYSISEWQSFDNNGTKLISNPGCFPTATLLALHPLISEKIVDLSSIIIDAKTGVSGAGRSLSQRVHFSEMNENLSAYAIGNHKHKPEIEQYLSIIAGQDVSVIFTPHLVPMTRGILSTIYVKLSSEYTTESLHKLMTSYYANQPFVRIRDIGTFPTTKEVLGSNYCDIGIYVDETTQTAILVSVIDNLVKGASGQAIQNLNILYDFEVTTGLNQSPVYP</sequence>
<comment type="function">
    <text evidence="1">Catalyzes the NADPH-dependent reduction of N-acetyl-5-glutamyl phosphate to yield N-acetyl-L-glutamate 5-semialdehyde.</text>
</comment>
<comment type="catalytic activity">
    <reaction evidence="1">
        <text>N-acetyl-L-glutamate 5-semialdehyde + phosphate + NADP(+) = N-acetyl-L-glutamyl 5-phosphate + NADPH + H(+)</text>
        <dbReference type="Rhea" id="RHEA:21588"/>
        <dbReference type="ChEBI" id="CHEBI:15378"/>
        <dbReference type="ChEBI" id="CHEBI:29123"/>
        <dbReference type="ChEBI" id="CHEBI:43474"/>
        <dbReference type="ChEBI" id="CHEBI:57783"/>
        <dbReference type="ChEBI" id="CHEBI:57936"/>
        <dbReference type="ChEBI" id="CHEBI:58349"/>
        <dbReference type="EC" id="1.2.1.38"/>
    </reaction>
</comment>
<comment type="pathway">
    <text evidence="1">Amino-acid biosynthesis; L-arginine biosynthesis; N(2)-acetyl-L-ornithine from L-glutamate: step 3/4.</text>
</comment>
<comment type="subcellular location">
    <subcellularLocation>
        <location evidence="1">Cytoplasm</location>
    </subcellularLocation>
</comment>
<comment type="similarity">
    <text evidence="1">Belongs to the NAGSA dehydrogenase family. Type 1 subfamily.</text>
</comment>
<comment type="sequence caution" evidence="2">
    <conflict type="erroneous initiation">
        <sequence resource="EMBL-CDS" id="CAG41927"/>
    </conflict>
</comment>
<keyword id="KW-0028">Amino-acid biosynthesis</keyword>
<keyword id="KW-0055">Arginine biosynthesis</keyword>
<keyword id="KW-0963">Cytoplasm</keyword>
<keyword id="KW-0521">NADP</keyword>
<keyword id="KW-0560">Oxidoreductase</keyword>
<protein>
    <recommendedName>
        <fullName evidence="1">N-acetyl-gamma-glutamyl-phosphate reductase</fullName>
        <shortName evidence="1">AGPR</shortName>
        <ecNumber evidence="1">1.2.1.38</ecNumber>
    </recommendedName>
    <alternativeName>
        <fullName evidence="1">N-acetyl-glutamate semialdehyde dehydrogenase</fullName>
        <shortName evidence="1">NAGSA dehydrogenase</shortName>
    </alternativeName>
</protein>
<name>ARGC_STAAS</name>
<feature type="chain" id="PRO_0000112452" description="N-acetyl-gamma-glutamyl-phosphate reductase">
    <location>
        <begin position="1"/>
        <end position="343"/>
    </location>
</feature>
<feature type="active site" evidence="1">
    <location>
        <position position="147"/>
    </location>
</feature>
<proteinExistence type="inferred from homology"/>
<dbReference type="EC" id="1.2.1.38" evidence="1"/>
<dbReference type="EMBL" id="BX571857">
    <property type="protein sequence ID" value="CAG41927.1"/>
    <property type="status" value="ALT_INIT"/>
    <property type="molecule type" value="Genomic_DNA"/>
</dbReference>
<dbReference type="RefSeq" id="WP_000598483.1">
    <property type="nucleotide sequence ID" value="NC_002953.3"/>
</dbReference>
<dbReference type="SMR" id="Q6GCU2"/>
<dbReference type="KEGG" id="sas:SAS0159"/>
<dbReference type="HOGENOM" id="CLU_006384_0_1_9"/>
<dbReference type="UniPathway" id="UPA00068">
    <property type="reaction ID" value="UER00108"/>
</dbReference>
<dbReference type="GO" id="GO:0005737">
    <property type="term" value="C:cytoplasm"/>
    <property type="evidence" value="ECO:0007669"/>
    <property type="project" value="UniProtKB-SubCell"/>
</dbReference>
<dbReference type="GO" id="GO:0003942">
    <property type="term" value="F:N-acetyl-gamma-glutamyl-phosphate reductase activity"/>
    <property type="evidence" value="ECO:0007669"/>
    <property type="project" value="UniProtKB-UniRule"/>
</dbReference>
<dbReference type="GO" id="GO:0051287">
    <property type="term" value="F:NAD binding"/>
    <property type="evidence" value="ECO:0007669"/>
    <property type="project" value="InterPro"/>
</dbReference>
<dbReference type="GO" id="GO:0070401">
    <property type="term" value="F:NADP+ binding"/>
    <property type="evidence" value="ECO:0007669"/>
    <property type="project" value="InterPro"/>
</dbReference>
<dbReference type="GO" id="GO:0006526">
    <property type="term" value="P:L-arginine biosynthetic process"/>
    <property type="evidence" value="ECO:0007669"/>
    <property type="project" value="UniProtKB-UniRule"/>
</dbReference>
<dbReference type="CDD" id="cd23934">
    <property type="entry name" value="AGPR_1_C"/>
    <property type="match status" value="1"/>
</dbReference>
<dbReference type="CDD" id="cd17895">
    <property type="entry name" value="AGPR_1_N"/>
    <property type="match status" value="1"/>
</dbReference>
<dbReference type="FunFam" id="3.30.360.10:FF:000014">
    <property type="entry name" value="N-acetyl-gamma-glutamyl-phosphate reductase"/>
    <property type="match status" value="1"/>
</dbReference>
<dbReference type="Gene3D" id="3.30.360.10">
    <property type="entry name" value="Dihydrodipicolinate Reductase, domain 2"/>
    <property type="match status" value="1"/>
</dbReference>
<dbReference type="Gene3D" id="3.40.50.720">
    <property type="entry name" value="NAD(P)-binding Rossmann-like Domain"/>
    <property type="match status" value="1"/>
</dbReference>
<dbReference type="HAMAP" id="MF_00150">
    <property type="entry name" value="ArgC_type1"/>
    <property type="match status" value="1"/>
</dbReference>
<dbReference type="InterPro" id="IPR023013">
    <property type="entry name" value="AGPR_AS"/>
</dbReference>
<dbReference type="InterPro" id="IPR000706">
    <property type="entry name" value="AGPR_type-1"/>
</dbReference>
<dbReference type="InterPro" id="IPR036291">
    <property type="entry name" value="NAD(P)-bd_dom_sf"/>
</dbReference>
<dbReference type="InterPro" id="IPR050085">
    <property type="entry name" value="NAGSA_dehydrogenase"/>
</dbReference>
<dbReference type="InterPro" id="IPR000534">
    <property type="entry name" value="Semialdehyde_DH_NAD-bd"/>
</dbReference>
<dbReference type="NCBIfam" id="TIGR01850">
    <property type="entry name" value="argC"/>
    <property type="match status" value="1"/>
</dbReference>
<dbReference type="PANTHER" id="PTHR32338:SF10">
    <property type="entry name" value="N-ACETYL-GAMMA-GLUTAMYL-PHOSPHATE REDUCTASE, CHLOROPLASTIC-RELATED"/>
    <property type="match status" value="1"/>
</dbReference>
<dbReference type="PANTHER" id="PTHR32338">
    <property type="entry name" value="N-ACETYL-GAMMA-GLUTAMYL-PHOSPHATE REDUCTASE, CHLOROPLASTIC-RELATED-RELATED"/>
    <property type="match status" value="1"/>
</dbReference>
<dbReference type="Pfam" id="PF01118">
    <property type="entry name" value="Semialdhyde_dh"/>
    <property type="match status" value="1"/>
</dbReference>
<dbReference type="Pfam" id="PF22698">
    <property type="entry name" value="Semialdhyde_dhC_1"/>
    <property type="match status" value="1"/>
</dbReference>
<dbReference type="SMART" id="SM00859">
    <property type="entry name" value="Semialdhyde_dh"/>
    <property type="match status" value="1"/>
</dbReference>
<dbReference type="SUPFAM" id="SSF55347">
    <property type="entry name" value="Glyceraldehyde-3-phosphate dehydrogenase-like, C-terminal domain"/>
    <property type="match status" value="1"/>
</dbReference>
<dbReference type="SUPFAM" id="SSF51735">
    <property type="entry name" value="NAD(P)-binding Rossmann-fold domains"/>
    <property type="match status" value="1"/>
</dbReference>
<dbReference type="PROSITE" id="PS01224">
    <property type="entry name" value="ARGC"/>
    <property type="match status" value="1"/>
</dbReference>
<gene>
    <name evidence="1" type="primary">argC</name>
    <name type="ordered locus">SAS0159</name>
</gene>
<organism>
    <name type="scientific">Staphylococcus aureus (strain MSSA476)</name>
    <dbReference type="NCBI Taxonomy" id="282459"/>
    <lineage>
        <taxon>Bacteria</taxon>
        <taxon>Bacillati</taxon>
        <taxon>Bacillota</taxon>
        <taxon>Bacilli</taxon>
        <taxon>Bacillales</taxon>
        <taxon>Staphylococcaceae</taxon>
        <taxon>Staphylococcus</taxon>
    </lineage>
</organism>
<accession>Q6GCU2</accession>
<reference key="1">
    <citation type="journal article" date="2004" name="Proc. Natl. Acad. Sci. U.S.A.">
        <title>Complete genomes of two clinical Staphylococcus aureus strains: evidence for the rapid evolution of virulence and drug resistance.</title>
        <authorList>
            <person name="Holden M.T.G."/>
            <person name="Feil E.J."/>
            <person name="Lindsay J.A."/>
            <person name="Peacock S.J."/>
            <person name="Day N.P.J."/>
            <person name="Enright M.C."/>
            <person name="Foster T.J."/>
            <person name="Moore C.E."/>
            <person name="Hurst L."/>
            <person name="Atkin R."/>
            <person name="Barron A."/>
            <person name="Bason N."/>
            <person name="Bentley S.D."/>
            <person name="Chillingworth C."/>
            <person name="Chillingworth T."/>
            <person name="Churcher C."/>
            <person name="Clark L."/>
            <person name="Corton C."/>
            <person name="Cronin A."/>
            <person name="Doggett J."/>
            <person name="Dowd L."/>
            <person name="Feltwell T."/>
            <person name="Hance Z."/>
            <person name="Harris B."/>
            <person name="Hauser H."/>
            <person name="Holroyd S."/>
            <person name="Jagels K."/>
            <person name="James K.D."/>
            <person name="Lennard N."/>
            <person name="Line A."/>
            <person name="Mayes R."/>
            <person name="Moule S."/>
            <person name="Mungall K."/>
            <person name="Ormond D."/>
            <person name="Quail M.A."/>
            <person name="Rabbinowitsch E."/>
            <person name="Rutherford K.M."/>
            <person name="Sanders M."/>
            <person name="Sharp S."/>
            <person name="Simmonds M."/>
            <person name="Stevens K."/>
            <person name="Whitehead S."/>
            <person name="Barrell B.G."/>
            <person name="Spratt B.G."/>
            <person name="Parkhill J."/>
        </authorList>
    </citation>
    <scope>NUCLEOTIDE SEQUENCE [LARGE SCALE GENOMIC DNA]</scope>
    <source>
        <strain>MSSA476</strain>
    </source>
</reference>
<evidence type="ECO:0000255" key="1">
    <source>
        <dbReference type="HAMAP-Rule" id="MF_00150"/>
    </source>
</evidence>
<evidence type="ECO:0000305" key="2"/>